<evidence type="ECO:0000250" key="1">
    <source>
        <dbReference type="UniProtKB" id="P32970"/>
    </source>
</evidence>
<evidence type="ECO:0000255" key="2"/>
<evidence type="ECO:0000255" key="3">
    <source>
        <dbReference type="PROSITE-ProRule" id="PRU01387"/>
    </source>
</evidence>
<evidence type="ECO:0000305" key="4"/>
<name>CD70_PIG</name>
<keyword id="KW-1003">Cell membrane</keyword>
<keyword id="KW-1015">Disulfide bond</keyword>
<keyword id="KW-0325">Glycoprotein</keyword>
<keyword id="KW-0472">Membrane</keyword>
<keyword id="KW-1185">Reference proteome</keyword>
<keyword id="KW-0735">Signal-anchor</keyword>
<keyword id="KW-0812">Transmembrane</keyword>
<keyword id="KW-1133">Transmembrane helix</keyword>
<protein>
    <recommendedName>
        <fullName evidence="1">CD70 antigen</fullName>
    </recommendedName>
    <alternativeName>
        <fullName evidence="1">CD27 ligand</fullName>
        <shortName evidence="1">CD27-L</shortName>
    </alternativeName>
    <cdAntigenName>CD70</cdAntigenName>
</protein>
<organism>
    <name type="scientific">Sus scrofa</name>
    <name type="common">Pig</name>
    <dbReference type="NCBI Taxonomy" id="9823"/>
    <lineage>
        <taxon>Eukaryota</taxon>
        <taxon>Metazoa</taxon>
        <taxon>Chordata</taxon>
        <taxon>Craniata</taxon>
        <taxon>Vertebrata</taxon>
        <taxon>Euteleostomi</taxon>
        <taxon>Mammalia</taxon>
        <taxon>Eutheria</taxon>
        <taxon>Laurasiatheria</taxon>
        <taxon>Artiodactyla</taxon>
        <taxon>Suina</taxon>
        <taxon>Suidae</taxon>
        <taxon>Sus</taxon>
    </lineage>
</organism>
<accession>Q3ZDR4</accession>
<gene>
    <name evidence="1" type="primary">CD70</name>
    <name evidence="1" type="synonym">CD27L</name>
</gene>
<comment type="function">
    <text evidence="1">Expressed at the plasma membrane of B cells, it is the ligand of the CD27 receptor which is specifically expressed at the surface of T cells. The CD70-CD27 signaling pathway mediates antigen-specific T cell activation and expansion which in turn provides immune surveillance of B cells.</text>
</comment>
<comment type="subunit">
    <text evidence="1">Homotrimer.</text>
</comment>
<comment type="subcellular location">
    <subcellularLocation>
        <location evidence="1">Cell membrane</location>
        <topology evidence="2">Single-pass type II membrane protein</topology>
    </subcellularLocation>
</comment>
<comment type="PTM">
    <text evidence="1">N-glycosylated.</text>
</comment>
<comment type="similarity">
    <text evidence="4">Belongs to the tumor necrosis factor family.</text>
</comment>
<sequence length="190" mass="21275">MEEEGSGCNVPRLPWASILRAALLLLLIGMVIYCFLCGQRFTQQQLDSTGWDLAELLLNHTESRQDPRLRWQGSPALGRSFVHGPELDNGQLRIQRTGIYRLHIQVTLTNCSSSTWTVMPRQATLTLGICSPTTHSISLLRLNFHHTCRVASQRLTPLAKGDVLCTNLTLPLLPSRNADETFFGVQLVRP</sequence>
<reference key="1">
    <citation type="submission" date="2005-03" db="EMBL/GenBank/DDBJ databases">
        <authorList>
            <person name="Kang J.-H."/>
            <person name="Jeon D.-H."/>
            <person name="Cho J.-J."/>
            <person name="Lee D.-S."/>
            <person name="Lee J.-R."/>
            <person name="Hwang W.-S."/>
            <person name="Lee G."/>
        </authorList>
    </citation>
    <scope>NUCLEOTIDE SEQUENCE [MRNA]</scope>
</reference>
<feature type="chain" id="PRO_0000286000" description="CD70 antigen">
    <location>
        <begin position="1"/>
        <end position="190"/>
    </location>
</feature>
<feature type="topological domain" description="Cytoplasmic" evidence="2">
    <location>
        <begin position="1"/>
        <end position="17"/>
    </location>
</feature>
<feature type="transmembrane region" description="Helical" evidence="2">
    <location>
        <begin position="18"/>
        <end position="38"/>
    </location>
</feature>
<feature type="topological domain" description="Extracellular" evidence="2">
    <location>
        <begin position="39"/>
        <end position="190"/>
    </location>
</feature>
<feature type="domain" description="THD" evidence="3">
    <location>
        <begin position="52"/>
        <end position="188"/>
    </location>
</feature>
<feature type="glycosylation site" description="N-linked (GlcNAc...) asparagine" evidence="2">
    <location>
        <position position="59"/>
    </location>
</feature>
<feature type="glycosylation site" description="N-linked (GlcNAc...) asparagine" evidence="2">
    <location>
        <position position="110"/>
    </location>
</feature>
<feature type="glycosylation site" description="N-linked (GlcNAc...) asparagine" evidence="2">
    <location>
        <position position="167"/>
    </location>
</feature>
<feature type="disulfide bond" evidence="3">
    <location>
        <begin position="111"/>
        <end position="148"/>
    </location>
</feature>
<feature type="disulfide bond" evidence="3">
    <location>
        <begin position="130"/>
        <end position="165"/>
    </location>
</feature>
<proteinExistence type="evidence at transcript level"/>
<dbReference type="EMBL" id="AY949027">
    <property type="protein sequence ID" value="AAY24694.1"/>
    <property type="molecule type" value="mRNA"/>
</dbReference>
<dbReference type="RefSeq" id="NP_001037996.1">
    <property type="nucleotide sequence ID" value="NM_001044531.1"/>
</dbReference>
<dbReference type="SMR" id="Q3ZDR4"/>
<dbReference type="FunCoup" id="Q3ZDR4">
    <property type="interactions" value="182"/>
</dbReference>
<dbReference type="STRING" id="9823.ENSSSCP00000035363"/>
<dbReference type="GlyCosmos" id="Q3ZDR4">
    <property type="glycosylation" value="3 sites, No reported glycans"/>
</dbReference>
<dbReference type="GlyGen" id="Q3ZDR4">
    <property type="glycosylation" value="3 sites"/>
</dbReference>
<dbReference type="PaxDb" id="9823-ENSSSCP00000023818"/>
<dbReference type="Ensembl" id="ENSSSCT00115015381">
    <property type="protein sequence ID" value="ENSSSCP00115014519"/>
    <property type="gene ID" value="ENSSSCG00115008815"/>
</dbReference>
<dbReference type="GeneID" id="733577"/>
<dbReference type="KEGG" id="ssc:733577"/>
<dbReference type="CTD" id="970"/>
<dbReference type="eggNOG" id="ENOG502TEKD">
    <property type="taxonomic scope" value="Eukaryota"/>
</dbReference>
<dbReference type="HOGENOM" id="CLU_114585_0_0_1"/>
<dbReference type="InParanoid" id="Q3ZDR4"/>
<dbReference type="OMA" id="FGIQWVH"/>
<dbReference type="OrthoDB" id="9444364at2759"/>
<dbReference type="TreeFam" id="TF338269"/>
<dbReference type="Proteomes" id="UP000008227">
    <property type="component" value="Unplaced"/>
</dbReference>
<dbReference type="Proteomes" id="UP000314985">
    <property type="component" value="Unplaced"/>
</dbReference>
<dbReference type="Proteomes" id="UP000694570">
    <property type="component" value="Unplaced"/>
</dbReference>
<dbReference type="Proteomes" id="UP000694571">
    <property type="component" value="Unplaced"/>
</dbReference>
<dbReference type="Proteomes" id="UP000694720">
    <property type="component" value="Unplaced"/>
</dbReference>
<dbReference type="Proteomes" id="UP000694722">
    <property type="component" value="Unplaced"/>
</dbReference>
<dbReference type="Proteomes" id="UP000694723">
    <property type="component" value="Unplaced"/>
</dbReference>
<dbReference type="Proteomes" id="UP000694724">
    <property type="component" value="Unplaced"/>
</dbReference>
<dbReference type="Proteomes" id="UP000694725">
    <property type="component" value="Unplaced"/>
</dbReference>
<dbReference type="Proteomes" id="UP000694726">
    <property type="component" value="Unplaced"/>
</dbReference>
<dbReference type="Proteomes" id="UP000694727">
    <property type="component" value="Unplaced"/>
</dbReference>
<dbReference type="Proteomes" id="UP000694728">
    <property type="component" value="Unplaced"/>
</dbReference>
<dbReference type="GO" id="GO:0005886">
    <property type="term" value="C:plasma membrane"/>
    <property type="evidence" value="ECO:0000250"/>
    <property type="project" value="UniProtKB"/>
</dbReference>
<dbReference type="GO" id="GO:0048018">
    <property type="term" value="F:receptor ligand activity"/>
    <property type="evidence" value="ECO:0000250"/>
    <property type="project" value="UniProtKB"/>
</dbReference>
<dbReference type="GO" id="GO:0005164">
    <property type="term" value="F:tumor necrosis factor receptor binding"/>
    <property type="evidence" value="ECO:0007669"/>
    <property type="project" value="InterPro"/>
</dbReference>
<dbReference type="GO" id="GO:0090717">
    <property type="term" value="P:adaptive immune memory response involving T cells and B cells"/>
    <property type="evidence" value="ECO:0000250"/>
    <property type="project" value="UniProtKB"/>
</dbReference>
<dbReference type="GO" id="GO:0160162">
    <property type="term" value="P:CD27 signaling pathway"/>
    <property type="evidence" value="ECO:0000250"/>
    <property type="project" value="UniProtKB"/>
</dbReference>
<dbReference type="GO" id="GO:0042110">
    <property type="term" value="P:T cell activation"/>
    <property type="evidence" value="ECO:0000250"/>
    <property type="project" value="UniProtKB"/>
</dbReference>
<dbReference type="GO" id="GO:0033209">
    <property type="term" value="P:tumor necrosis factor-mediated signaling pathway"/>
    <property type="evidence" value="ECO:0007669"/>
    <property type="project" value="InterPro"/>
</dbReference>
<dbReference type="FunFam" id="2.60.120.40:FF:000027">
    <property type="entry name" value="CD70 antigen"/>
    <property type="match status" value="1"/>
</dbReference>
<dbReference type="Gene3D" id="2.60.120.40">
    <property type="match status" value="1"/>
</dbReference>
<dbReference type="InterPro" id="IPR042374">
    <property type="entry name" value="CD70"/>
</dbReference>
<dbReference type="InterPro" id="IPR006052">
    <property type="entry name" value="TNF_dom"/>
</dbReference>
<dbReference type="InterPro" id="IPR008983">
    <property type="entry name" value="Tumour_necrosis_fac-like_dom"/>
</dbReference>
<dbReference type="PANTHER" id="PTHR15152">
    <property type="entry name" value="CD70 ANTIGEN"/>
    <property type="match status" value="1"/>
</dbReference>
<dbReference type="PANTHER" id="PTHR15152:SF0">
    <property type="entry name" value="CD70 ANTIGEN"/>
    <property type="match status" value="1"/>
</dbReference>
<dbReference type="Pfam" id="PF00229">
    <property type="entry name" value="TNF"/>
    <property type="match status" value="1"/>
</dbReference>
<dbReference type="SMART" id="SM00207">
    <property type="entry name" value="TNF"/>
    <property type="match status" value="1"/>
</dbReference>
<dbReference type="SUPFAM" id="SSF49842">
    <property type="entry name" value="TNF-like"/>
    <property type="match status" value="1"/>
</dbReference>
<dbReference type="PROSITE" id="PS50049">
    <property type="entry name" value="THD_2"/>
    <property type="match status" value="1"/>
</dbReference>